<name>AROK_BAUCH</name>
<reference key="1">
    <citation type="journal article" date="2006" name="PLoS Biol.">
        <title>Metabolic complementarity and genomics of the dual bacterial symbiosis of sharpshooters.</title>
        <authorList>
            <person name="Wu D."/>
            <person name="Daugherty S.C."/>
            <person name="Van Aken S.E."/>
            <person name="Pai G.H."/>
            <person name="Watkins K.L."/>
            <person name="Khouri H."/>
            <person name="Tallon L.J."/>
            <person name="Zaborsky J.M."/>
            <person name="Dunbar H.E."/>
            <person name="Tran P.L."/>
            <person name="Moran N.A."/>
            <person name="Eisen J.A."/>
        </authorList>
    </citation>
    <scope>NUCLEOTIDE SEQUENCE [LARGE SCALE GENOMIC DNA]</scope>
</reference>
<protein>
    <recommendedName>
        <fullName evidence="1">Shikimate kinase</fullName>
        <shortName evidence="1">SK</shortName>
        <ecNumber evidence="1">2.7.1.71</ecNumber>
    </recommendedName>
</protein>
<organism>
    <name type="scientific">Baumannia cicadellinicola subsp. Homalodisca coagulata</name>
    <dbReference type="NCBI Taxonomy" id="374463"/>
    <lineage>
        <taxon>Bacteria</taxon>
        <taxon>Pseudomonadati</taxon>
        <taxon>Pseudomonadota</taxon>
        <taxon>Gammaproteobacteria</taxon>
        <taxon>Candidatus Palibaumannia</taxon>
    </lineage>
</organism>
<sequence length="173" mass="19629">MVEKRNIFLIGPMGAGKSTIGRQLAQQLNMEFFDSDQEIERLTGADIGWVFDVEGEDGFRSREEKVINELTEKQGIVLATGGGSIKSRETRNRLSARGVVIYLDTTIEKQLVRTKRDKKRPLLQAKIPSREVLEALARERNPLYEEIADITIRANEQSAKVVAYHIISMLERN</sequence>
<comment type="function">
    <text evidence="1">Catalyzes the specific phosphorylation of the 3-hydroxyl group of shikimic acid using ATP as a cosubstrate.</text>
</comment>
<comment type="catalytic activity">
    <reaction evidence="1">
        <text>shikimate + ATP = 3-phosphoshikimate + ADP + H(+)</text>
        <dbReference type="Rhea" id="RHEA:13121"/>
        <dbReference type="ChEBI" id="CHEBI:15378"/>
        <dbReference type="ChEBI" id="CHEBI:30616"/>
        <dbReference type="ChEBI" id="CHEBI:36208"/>
        <dbReference type="ChEBI" id="CHEBI:145989"/>
        <dbReference type="ChEBI" id="CHEBI:456216"/>
        <dbReference type="EC" id="2.7.1.71"/>
    </reaction>
</comment>
<comment type="cofactor">
    <cofactor evidence="1">
        <name>Mg(2+)</name>
        <dbReference type="ChEBI" id="CHEBI:18420"/>
    </cofactor>
    <text evidence="1">Binds 1 Mg(2+) ion per subunit.</text>
</comment>
<comment type="pathway">
    <text evidence="1">Metabolic intermediate biosynthesis; chorismate biosynthesis; chorismate from D-erythrose 4-phosphate and phosphoenolpyruvate: step 5/7.</text>
</comment>
<comment type="subunit">
    <text evidence="1">Monomer.</text>
</comment>
<comment type="subcellular location">
    <subcellularLocation>
        <location evidence="1">Cytoplasm</location>
    </subcellularLocation>
</comment>
<comment type="similarity">
    <text evidence="1">Belongs to the shikimate kinase family.</text>
</comment>
<feature type="chain" id="PRO_1000022965" description="Shikimate kinase">
    <location>
        <begin position="1"/>
        <end position="173"/>
    </location>
</feature>
<feature type="binding site" evidence="1">
    <location>
        <begin position="14"/>
        <end position="19"/>
    </location>
    <ligand>
        <name>ATP</name>
        <dbReference type="ChEBI" id="CHEBI:30616"/>
    </ligand>
</feature>
<feature type="binding site" evidence="1">
    <location>
        <position position="18"/>
    </location>
    <ligand>
        <name>Mg(2+)</name>
        <dbReference type="ChEBI" id="CHEBI:18420"/>
    </ligand>
</feature>
<feature type="binding site" evidence="1">
    <location>
        <position position="36"/>
    </location>
    <ligand>
        <name>substrate</name>
    </ligand>
</feature>
<feature type="binding site" evidence="1">
    <location>
        <position position="60"/>
    </location>
    <ligand>
        <name>substrate</name>
    </ligand>
</feature>
<feature type="binding site" evidence="1">
    <location>
        <position position="82"/>
    </location>
    <ligand>
        <name>substrate</name>
    </ligand>
</feature>
<feature type="binding site" evidence="1">
    <location>
        <position position="120"/>
    </location>
    <ligand>
        <name>ATP</name>
        <dbReference type="ChEBI" id="CHEBI:30616"/>
    </ligand>
</feature>
<feature type="binding site" evidence="1">
    <location>
        <position position="140"/>
    </location>
    <ligand>
        <name>substrate</name>
    </ligand>
</feature>
<feature type="binding site" evidence="1">
    <location>
        <position position="157"/>
    </location>
    <ligand>
        <name>ATP</name>
        <dbReference type="ChEBI" id="CHEBI:30616"/>
    </ligand>
</feature>
<accession>Q1LU61</accession>
<dbReference type="EC" id="2.7.1.71" evidence="1"/>
<dbReference type="EMBL" id="CP000238">
    <property type="protein sequence ID" value="ABF14048.1"/>
    <property type="molecule type" value="Genomic_DNA"/>
</dbReference>
<dbReference type="RefSeq" id="WP_011520236.1">
    <property type="nucleotide sequence ID" value="NC_007984.1"/>
</dbReference>
<dbReference type="SMR" id="Q1LU61"/>
<dbReference type="STRING" id="374463.BCI_0024"/>
<dbReference type="KEGG" id="bci:BCI_0024"/>
<dbReference type="HOGENOM" id="CLU_057607_2_2_6"/>
<dbReference type="OrthoDB" id="9800332at2"/>
<dbReference type="UniPathway" id="UPA00053">
    <property type="reaction ID" value="UER00088"/>
</dbReference>
<dbReference type="Proteomes" id="UP000002427">
    <property type="component" value="Chromosome"/>
</dbReference>
<dbReference type="GO" id="GO:0005829">
    <property type="term" value="C:cytosol"/>
    <property type="evidence" value="ECO:0007669"/>
    <property type="project" value="TreeGrafter"/>
</dbReference>
<dbReference type="GO" id="GO:0005524">
    <property type="term" value="F:ATP binding"/>
    <property type="evidence" value="ECO:0007669"/>
    <property type="project" value="UniProtKB-UniRule"/>
</dbReference>
<dbReference type="GO" id="GO:0000287">
    <property type="term" value="F:magnesium ion binding"/>
    <property type="evidence" value="ECO:0007669"/>
    <property type="project" value="UniProtKB-UniRule"/>
</dbReference>
<dbReference type="GO" id="GO:0004765">
    <property type="term" value="F:shikimate kinase activity"/>
    <property type="evidence" value="ECO:0007669"/>
    <property type="project" value="UniProtKB-UniRule"/>
</dbReference>
<dbReference type="GO" id="GO:0008652">
    <property type="term" value="P:amino acid biosynthetic process"/>
    <property type="evidence" value="ECO:0007669"/>
    <property type="project" value="UniProtKB-KW"/>
</dbReference>
<dbReference type="GO" id="GO:0009073">
    <property type="term" value="P:aromatic amino acid family biosynthetic process"/>
    <property type="evidence" value="ECO:0007669"/>
    <property type="project" value="UniProtKB-KW"/>
</dbReference>
<dbReference type="GO" id="GO:0009423">
    <property type="term" value="P:chorismate biosynthetic process"/>
    <property type="evidence" value="ECO:0007669"/>
    <property type="project" value="UniProtKB-UniRule"/>
</dbReference>
<dbReference type="CDD" id="cd00464">
    <property type="entry name" value="SK"/>
    <property type="match status" value="1"/>
</dbReference>
<dbReference type="FunFam" id="3.40.50.300:FF:000099">
    <property type="entry name" value="Shikimate kinase 1"/>
    <property type="match status" value="1"/>
</dbReference>
<dbReference type="Gene3D" id="3.40.50.300">
    <property type="entry name" value="P-loop containing nucleotide triphosphate hydrolases"/>
    <property type="match status" value="1"/>
</dbReference>
<dbReference type="HAMAP" id="MF_00109">
    <property type="entry name" value="Shikimate_kinase"/>
    <property type="match status" value="1"/>
</dbReference>
<dbReference type="InterPro" id="IPR027417">
    <property type="entry name" value="P-loop_NTPase"/>
</dbReference>
<dbReference type="InterPro" id="IPR031322">
    <property type="entry name" value="Shikimate/glucono_kinase"/>
</dbReference>
<dbReference type="InterPro" id="IPR000623">
    <property type="entry name" value="Shikimate_kinase/TSH1"/>
</dbReference>
<dbReference type="InterPro" id="IPR023000">
    <property type="entry name" value="Shikimate_kinase_CS"/>
</dbReference>
<dbReference type="NCBIfam" id="NF003456">
    <property type="entry name" value="PRK05057.1"/>
    <property type="match status" value="1"/>
</dbReference>
<dbReference type="PANTHER" id="PTHR21087">
    <property type="entry name" value="SHIKIMATE KINASE"/>
    <property type="match status" value="1"/>
</dbReference>
<dbReference type="PANTHER" id="PTHR21087:SF16">
    <property type="entry name" value="SHIKIMATE KINASE 1, CHLOROPLASTIC"/>
    <property type="match status" value="1"/>
</dbReference>
<dbReference type="Pfam" id="PF01202">
    <property type="entry name" value="SKI"/>
    <property type="match status" value="1"/>
</dbReference>
<dbReference type="PRINTS" id="PR01100">
    <property type="entry name" value="SHIKIMTKNASE"/>
</dbReference>
<dbReference type="SUPFAM" id="SSF52540">
    <property type="entry name" value="P-loop containing nucleoside triphosphate hydrolases"/>
    <property type="match status" value="1"/>
</dbReference>
<dbReference type="PROSITE" id="PS01128">
    <property type="entry name" value="SHIKIMATE_KINASE"/>
    <property type="match status" value="1"/>
</dbReference>
<evidence type="ECO:0000255" key="1">
    <source>
        <dbReference type="HAMAP-Rule" id="MF_00109"/>
    </source>
</evidence>
<keyword id="KW-0028">Amino-acid biosynthesis</keyword>
<keyword id="KW-0057">Aromatic amino acid biosynthesis</keyword>
<keyword id="KW-0067">ATP-binding</keyword>
<keyword id="KW-0963">Cytoplasm</keyword>
<keyword id="KW-0418">Kinase</keyword>
<keyword id="KW-0460">Magnesium</keyword>
<keyword id="KW-0479">Metal-binding</keyword>
<keyword id="KW-0547">Nucleotide-binding</keyword>
<keyword id="KW-1185">Reference proteome</keyword>
<keyword id="KW-0808">Transferase</keyword>
<gene>
    <name evidence="1" type="primary">aroK</name>
    <name type="ordered locus">BCI_0024</name>
</gene>
<proteinExistence type="inferred from homology"/>